<accession>A0A348HAX7</accession>
<protein>
    <recommendedName>
        <fullName evidence="3">Phomoidride biosynthesis cluster protein B</fullName>
    </recommendedName>
</protein>
<sequence>MSAILKLLEYCLGRLFYRRRGYDAQLFYKSAAFAKHSSPTIPITSPDCGKTGAILTTEYSKFGSGKIPQFTWPAAAPDVKEFLMLCEDPDAPMGHPNVHGIYCFIPPTVTSFGPTDLELIKEVDGVKVLESGYRVGKNRRNVVYIAPRPPLGHGPHRYLFELVALSEKLDPEGISKVPDKGEIEKAIEGKVASWGLWEATYESTWDRK</sequence>
<gene>
    <name evidence="3" type="primary">phiB</name>
</gene>
<evidence type="ECO:0000269" key="1">
    <source>
    </source>
</evidence>
<evidence type="ECO:0000269" key="2">
    <source>
    </source>
</evidence>
<evidence type="ECO:0000303" key="3">
    <source>
    </source>
</evidence>
<evidence type="ECO:0000305" key="4"/>
<evidence type="ECO:0000305" key="5">
    <source>
    </source>
</evidence>
<reference key="1">
    <citation type="journal article" date="2015" name="Org. Lett.">
        <title>Biosynthetic study on antihypercholesterolemic agent phomoidride: general biogenesis of fungal dimeric anhydrides.</title>
        <authorList>
            <person name="Fujii R."/>
            <person name="Matsu Y."/>
            <person name="Minami A."/>
            <person name="Nagamine S."/>
            <person name="Takeuchi I."/>
            <person name="Gomi K."/>
            <person name="Oikawa H."/>
        </authorList>
    </citation>
    <scope>NUCLEOTIDE SEQUENCE [GENOMIC DNA]</scope>
    <source>
        <strain>ATCC 74256</strain>
    </source>
</reference>
<reference key="2">
    <citation type="journal article" date="1997" name="J. Antibiot.">
        <title>CP-225,917 and CP-263,114, novel Ras farnesylation inhibitors from an unidentified fungus. I. Taxonomy, fermentation, isolation, and biochemical properties.</title>
        <authorList>
            <person name="Dabrah T.T."/>
            <person name="Harwood H.J. Jr."/>
            <person name="Huang L.H."/>
            <person name="Jankovich N.D."/>
            <person name="Kaneko T."/>
            <person name="Li J.C."/>
            <person name="Lindsey S."/>
            <person name="Moshier P.M."/>
            <person name="Subashi T.A."/>
            <person name="Therrien M."/>
            <person name="Watts P.C."/>
        </authorList>
    </citation>
    <scope>BIOTECHNOLOGY</scope>
</reference>
<reference key="3">
    <citation type="journal article" date="2022" name="J. Am. Chem. Soc.">
        <title>Elucidation of late-stage biosynthesis of phomoidride: proposal of cyclization mechanism affording characteristic nine-membered ring of fungal dimeric anhydride.</title>
        <authorList>
            <person name="Yamamoto S."/>
            <person name="Matsuyama T."/>
            <person name="Ozaki T."/>
            <person name="Takino J."/>
            <person name="Sato H."/>
            <person name="Uchiyama M."/>
            <person name="Minami A."/>
            <person name="Oikawa H."/>
        </authorList>
    </citation>
    <scope>FUNCTION</scope>
</reference>
<name>PHIB_FUNX7</name>
<feature type="chain" id="PRO_0000458930" description="Phomoidride biosynthesis cluster protein B">
    <location>
        <begin position="1"/>
        <end position="208"/>
    </location>
</feature>
<proteinExistence type="evidence at protein level"/>
<dbReference type="EMBL" id="LC086931">
    <property type="protein sequence ID" value="BBG28499.1"/>
    <property type="molecule type" value="Genomic_DNA"/>
</dbReference>
<dbReference type="SMR" id="A0A348HAX7"/>
<dbReference type="CDD" id="cd00457">
    <property type="entry name" value="PEBP"/>
    <property type="match status" value="1"/>
</dbReference>
<dbReference type="Gene3D" id="3.90.280.10">
    <property type="entry name" value="PEBP-like"/>
    <property type="match status" value="1"/>
</dbReference>
<dbReference type="InterPro" id="IPR008914">
    <property type="entry name" value="PEBP"/>
</dbReference>
<dbReference type="InterPro" id="IPR036610">
    <property type="entry name" value="PEBP-like_sf"/>
</dbReference>
<dbReference type="InterPro" id="IPR049556">
    <property type="entry name" value="PhiB"/>
</dbReference>
<dbReference type="PANTHER" id="PTHR30289:SF1">
    <property type="entry name" value="PEBP (PHOSPHATIDYLETHANOLAMINE-BINDING PROTEIN) FAMILY PROTEIN"/>
    <property type="match status" value="1"/>
</dbReference>
<dbReference type="PANTHER" id="PTHR30289">
    <property type="entry name" value="UNCHARACTERIZED PROTEIN YBCL-RELATED"/>
    <property type="match status" value="1"/>
</dbReference>
<dbReference type="Pfam" id="PF01161">
    <property type="entry name" value="PBP"/>
    <property type="match status" value="1"/>
</dbReference>
<dbReference type="SUPFAM" id="SSF49777">
    <property type="entry name" value="PEBP-like"/>
    <property type="match status" value="1"/>
</dbReference>
<organism>
    <name type="scientific">Fungal sp. (strain ATCC 74256)</name>
    <dbReference type="NCBI Taxonomy" id="1729595"/>
    <lineage>
        <taxon>Eukaryota</taxon>
        <taxon>Fungi</taxon>
    </lineage>
</organism>
<comment type="function">
    <text evidence="1 5">Phosphatidylethanolamine-binding protein; part of the gene cluster that mediates the biosynthesis of the antihypercholesterolemic agents phomoidrides which are dimeric anhydrides (PubMed:26558485). Within the pathway, phiB is not essential for dimerization and its function has still to be determined (Probable). The pathway begins with the highly reducing polyketide synthase phiA that catalyzes the formation of a C12-fatty acyl-ACP, starting from one acetate and 5 malonate units. The hydrolase phiM is involved in the release of the C12-fatty acyl chain from phiA. The alkylcitrate synthase (ACS) phiJ and the alkylcitrate dehydratase (ACDH) phiI then give rise to decarboxylated monomeric anhydrides by coupling the C12-fatty acyl chain with oxalacetic acid. The cyclase phiC is responsible for the dimerization of the monomeric anhydrides which leads to the production of prephomoidride that contains the characteristic bicyclo[4.3.1]deca-1,6-diene system of phomoidrides. Iterative oxidation catalyzed by the alpha-ketoglutarate-dependent dioxygenase phiK produced then phomoidride A. Finally, the methyltransferase phiE converts phomoidride A to phomoidride B via an acetalization reaction. The phosphatidylethanolamine-binding protein phiB and phiN are not essential for dimerization and their functions have still to be determined (Probable).</text>
</comment>
<comment type="biotechnology">
    <text evidence="2">Phomoidrides A and B (also known as CP-225,917 and CP-263,114) are potent inhibitors of Ras farnesyltransferase and squalene synthase (PubMed:9066758). CP-225,917 and CP-263,114 inhibit Ras farnesyl transferase from rat brain with IC(50) values of 6 uM and 20 uoM, respectively (PubMed:9066758). CP-225,917 inhibits squalene synthase with an IC(50) value of 43 uM and CP-263,114 with an IC(50) of 160 uM (PubMed:9066758).</text>
</comment>
<comment type="similarity">
    <text evidence="4">Belongs to the tstB family.</text>
</comment>